<gene>
    <name type="primary">rseB</name>
    <name type="ordered locus">HI_0630</name>
</gene>
<evidence type="ECO:0000250" key="1"/>
<evidence type="ECO:0000255" key="2"/>
<evidence type="ECO:0000305" key="3"/>
<sequence>MKKIPLKFTALSLSLLLSSIASAEELSAKQSLDKMTQALDNLNYEIAFVQTTPANMDSFRYRHIKQDNKTYAQLVTLDGRQQEIIQRDNLVSYFQPNAQAFTLNSGNIVDAMPAVVRANFDKLSSDYDFVKLGKDRVAGRFADTIRIVPKDDFRYQYLVFIDEENGLLLRSDMLDREGKLLDQFRVVTLYIDDRLRGLTDYINKVSLPPLLKESKNEQSSDITWSAGWLPQGFSLIRYTQEILENEIIDSALYSDGLFTFTLFVSNVGSNDLPENTWKQGAYTIYSEVIGGKEITFIGQLPISTAKRIVQEVKFR</sequence>
<dbReference type="EMBL" id="L42023">
    <property type="protein sequence ID" value="AAC22290.1"/>
    <property type="molecule type" value="Genomic_DNA"/>
</dbReference>
<dbReference type="PIR" id="H64082">
    <property type="entry name" value="H64082"/>
</dbReference>
<dbReference type="RefSeq" id="NP_438790.1">
    <property type="nucleotide sequence ID" value="NC_000907.1"/>
</dbReference>
<dbReference type="SMR" id="P44792"/>
<dbReference type="STRING" id="71421.HI_0630"/>
<dbReference type="DNASU" id="949706"/>
<dbReference type="EnsemblBacteria" id="AAC22290">
    <property type="protein sequence ID" value="AAC22290"/>
    <property type="gene ID" value="HI_0630"/>
</dbReference>
<dbReference type="KEGG" id="hin:HI_0630"/>
<dbReference type="PATRIC" id="fig|71421.8.peg.656"/>
<dbReference type="eggNOG" id="COG3026">
    <property type="taxonomic scope" value="Bacteria"/>
</dbReference>
<dbReference type="HOGENOM" id="CLU_054710_1_0_6"/>
<dbReference type="OrthoDB" id="7067274at2"/>
<dbReference type="PhylomeDB" id="P44792"/>
<dbReference type="BioCyc" id="HINF71421:G1GJ1-657-MONOMER"/>
<dbReference type="Proteomes" id="UP000000579">
    <property type="component" value="Chromosome"/>
</dbReference>
<dbReference type="GO" id="GO:0030288">
    <property type="term" value="C:outer membrane-bounded periplasmic space"/>
    <property type="evidence" value="ECO:0000318"/>
    <property type="project" value="GO_Central"/>
</dbReference>
<dbReference type="GO" id="GO:0045152">
    <property type="term" value="F:antisigma factor binding"/>
    <property type="evidence" value="ECO:0000318"/>
    <property type="project" value="GO_Central"/>
</dbReference>
<dbReference type="GO" id="GO:0008289">
    <property type="term" value="F:lipid binding"/>
    <property type="evidence" value="ECO:0007669"/>
    <property type="project" value="UniProtKB-KW"/>
</dbReference>
<dbReference type="GO" id="GO:0032885">
    <property type="term" value="P:regulation of polysaccharide biosynthetic process"/>
    <property type="evidence" value="ECO:0000318"/>
    <property type="project" value="GO_Central"/>
</dbReference>
<dbReference type="CDD" id="cd16327">
    <property type="entry name" value="RseB"/>
    <property type="match status" value="1"/>
</dbReference>
<dbReference type="Gene3D" id="2.50.20.10">
    <property type="entry name" value="Lipoprotein localisation LolA/LolB/LppX"/>
    <property type="match status" value="1"/>
</dbReference>
<dbReference type="Gene3D" id="3.30.200.100">
    <property type="entry name" value="MucB/RseB, C-terminal domain"/>
    <property type="match status" value="1"/>
</dbReference>
<dbReference type="InterPro" id="IPR033436">
    <property type="entry name" value="MucB/RseB_C"/>
</dbReference>
<dbReference type="InterPro" id="IPR038484">
    <property type="entry name" value="MucB/RseB_C_sf"/>
</dbReference>
<dbReference type="InterPro" id="IPR033434">
    <property type="entry name" value="MucB/RseB_N"/>
</dbReference>
<dbReference type="InterPro" id="IPR005588">
    <property type="entry name" value="MucB_RseB"/>
</dbReference>
<dbReference type="NCBIfam" id="NF006990">
    <property type="entry name" value="PRK09455.1"/>
    <property type="match status" value="1"/>
</dbReference>
<dbReference type="PANTHER" id="PTHR38782">
    <property type="match status" value="1"/>
</dbReference>
<dbReference type="PANTHER" id="PTHR38782:SF1">
    <property type="entry name" value="SIGMA-E FACTOR REGULATORY PROTEIN RSEB"/>
    <property type="match status" value="1"/>
</dbReference>
<dbReference type="Pfam" id="PF03888">
    <property type="entry name" value="MucB_RseB"/>
    <property type="match status" value="1"/>
</dbReference>
<dbReference type="Pfam" id="PF17188">
    <property type="entry name" value="MucB_RseB_C"/>
    <property type="match status" value="1"/>
</dbReference>
<dbReference type="PIRSF" id="PIRSF005427">
    <property type="entry name" value="RseB"/>
    <property type="match status" value="1"/>
</dbReference>
<name>RSEB_HAEIN</name>
<comment type="function">
    <text evidence="1">Negatively modulates the activity of sigma-E (RpoE) by stabilizing RseA under non-stress conditions. Although not essential for association of sigma-E with Rsea it increases their affinity 2- to 3-fold. When bound to RseA it prevents proteolysis by DegS, which is probably relieved by lipopolysaccharide binding (LPS) (By similarity).</text>
</comment>
<comment type="activity regulation">
    <text evidence="1">Binding to RseA is inhibited by LPS fragments; phosphorylated N-acetylglucosamine (GlcNAc) with N-linked acyl chains are minimally necessary to disrupt binding to RseA. Once RseB is no longer bound to RseA the latter is susceptible to DegS degradation. Thus if periplasmic LPS levels increase the sigma-E regulon is induced (By similarity).</text>
</comment>
<comment type="subunit">
    <text evidence="1">Homodimer. Interacts with RseA (By similarity).</text>
</comment>
<comment type="subcellular location">
    <subcellularLocation>
        <location evidence="1">Periplasm</location>
    </subcellularLocation>
    <text evidence="1">Partially associates with the inner membrane via RseA.</text>
</comment>
<comment type="similarity">
    <text evidence="3">Belongs to the RseB family.</text>
</comment>
<protein>
    <recommendedName>
        <fullName>Sigma-E factor regulatory protein RseB</fullName>
    </recommendedName>
</protein>
<feature type="signal peptide" evidence="2">
    <location>
        <begin position="1"/>
        <end position="23"/>
    </location>
</feature>
<feature type="chain" id="PRO_0000022250" description="Sigma-E factor regulatory protein RseB">
    <location>
        <begin position="24"/>
        <end position="315"/>
    </location>
</feature>
<proteinExistence type="inferred from homology"/>
<keyword id="KW-0446">Lipid-binding</keyword>
<keyword id="KW-0574">Periplasm</keyword>
<keyword id="KW-1185">Reference proteome</keyword>
<keyword id="KW-0732">Signal</keyword>
<keyword id="KW-0804">Transcription</keyword>
<keyword id="KW-0805">Transcription regulation</keyword>
<organism>
    <name type="scientific">Haemophilus influenzae (strain ATCC 51907 / DSM 11121 / KW20 / Rd)</name>
    <dbReference type="NCBI Taxonomy" id="71421"/>
    <lineage>
        <taxon>Bacteria</taxon>
        <taxon>Pseudomonadati</taxon>
        <taxon>Pseudomonadota</taxon>
        <taxon>Gammaproteobacteria</taxon>
        <taxon>Pasteurellales</taxon>
        <taxon>Pasteurellaceae</taxon>
        <taxon>Haemophilus</taxon>
    </lineage>
</organism>
<reference key="1">
    <citation type="journal article" date="1995" name="Science">
        <title>Whole-genome random sequencing and assembly of Haemophilus influenzae Rd.</title>
        <authorList>
            <person name="Fleischmann R.D."/>
            <person name="Adams M.D."/>
            <person name="White O."/>
            <person name="Clayton R.A."/>
            <person name="Kirkness E.F."/>
            <person name="Kerlavage A.R."/>
            <person name="Bult C.J."/>
            <person name="Tomb J.-F."/>
            <person name="Dougherty B.A."/>
            <person name="Merrick J.M."/>
            <person name="McKenney K."/>
            <person name="Sutton G.G."/>
            <person name="FitzHugh W."/>
            <person name="Fields C.A."/>
            <person name="Gocayne J.D."/>
            <person name="Scott J.D."/>
            <person name="Shirley R."/>
            <person name="Liu L.-I."/>
            <person name="Glodek A."/>
            <person name="Kelley J.M."/>
            <person name="Weidman J.F."/>
            <person name="Phillips C.A."/>
            <person name="Spriggs T."/>
            <person name="Hedblom E."/>
            <person name="Cotton M.D."/>
            <person name="Utterback T.R."/>
            <person name="Hanna M.C."/>
            <person name="Nguyen D.T."/>
            <person name="Saudek D.M."/>
            <person name="Brandon R.C."/>
            <person name="Fine L.D."/>
            <person name="Fritchman J.L."/>
            <person name="Fuhrmann J.L."/>
            <person name="Geoghagen N.S.M."/>
            <person name="Gnehm C.L."/>
            <person name="McDonald L.A."/>
            <person name="Small K.V."/>
            <person name="Fraser C.M."/>
            <person name="Smith H.O."/>
            <person name="Venter J.C."/>
        </authorList>
    </citation>
    <scope>NUCLEOTIDE SEQUENCE [LARGE SCALE GENOMIC DNA]</scope>
    <source>
        <strain>ATCC 51907 / DSM 11121 / KW20 / Rd</strain>
    </source>
</reference>
<accession>P44792</accession>